<protein>
    <recommendedName>
        <fullName evidence="1">Adenine phosphoribosyltransferase</fullName>
        <shortName evidence="1">APRT</shortName>
        <ecNumber evidence="1">2.4.2.7</ecNumber>
    </recommendedName>
</protein>
<sequence>MDLKKYIRDVKNFPKPGILFKDISPLLADGEALNYTITSMAEVAKDVDVIVGPDARGFLFGTPTAAVLKKPFIMVRKPGKLPGKVISREYDLEYGNNILQIQADFIKKGQTVAIVDDVLATGGTIKAIIKLLKEQGAIIKKVIILLELTDLNGRDSINEDGIEIVSLVKF</sequence>
<evidence type="ECO:0000255" key="1">
    <source>
        <dbReference type="HAMAP-Rule" id="MF_00004"/>
    </source>
</evidence>
<feature type="chain" id="PRO_1000088985" description="Adenine phosphoribosyltransferase">
    <location>
        <begin position="1"/>
        <end position="170"/>
    </location>
</feature>
<comment type="function">
    <text evidence="1">Catalyzes a salvage reaction resulting in the formation of AMP, that is energically less costly than de novo synthesis.</text>
</comment>
<comment type="catalytic activity">
    <reaction evidence="1">
        <text>AMP + diphosphate = 5-phospho-alpha-D-ribose 1-diphosphate + adenine</text>
        <dbReference type="Rhea" id="RHEA:16609"/>
        <dbReference type="ChEBI" id="CHEBI:16708"/>
        <dbReference type="ChEBI" id="CHEBI:33019"/>
        <dbReference type="ChEBI" id="CHEBI:58017"/>
        <dbReference type="ChEBI" id="CHEBI:456215"/>
        <dbReference type="EC" id="2.4.2.7"/>
    </reaction>
</comment>
<comment type="pathway">
    <text evidence="1">Purine metabolism; AMP biosynthesis via salvage pathway; AMP from adenine: step 1/1.</text>
</comment>
<comment type="subunit">
    <text evidence="1">Homodimer.</text>
</comment>
<comment type="subcellular location">
    <subcellularLocation>
        <location evidence="1">Cytoplasm</location>
    </subcellularLocation>
</comment>
<comment type="similarity">
    <text evidence="1">Belongs to the purine/pyrimidine phosphoribosyltransferase family.</text>
</comment>
<dbReference type="EC" id="2.4.2.7" evidence="1"/>
<dbReference type="EMBL" id="CU179680">
    <property type="protein sequence ID" value="CAL59396.1"/>
    <property type="molecule type" value="Genomic_DNA"/>
</dbReference>
<dbReference type="RefSeq" id="WP_011949849.1">
    <property type="nucleotide sequence ID" value="NC_009497.1"/>
</dbReference>
<dbReference type="SMR" id="A5IZD7"/>
<dbReference type="STRING" id="347257.MAG6960"/>
<dbReference type="GeneID" id="93358423"/>
<dbReference type="KEGG" id="maa:MAG6960"/>
<dbReference type="HOGENOM" id="CLU_063339_3_0_14"/>
<dbReference type="UniPathway" id="UPA00588">
    <property type="reaction ID" value="UER00646"/>
</dbReference>
<dbReference type="Proteomes" id="UP000007065">
    <property type="component" value="Chromosome"/>
</dbReference>
<dbReference type="GO" id="GO:0005737">
    <property type="term" value="C:cytoplasm"/>
    <property type="evidence" value="ECO:0007669"/>
    <property type="project" value="UniProtKB-SubCell"/>
</dbReference>
<dbReference type="GO" id="GO:0002055">
    <property type="term" value="F:adenine binding"/>
    <property type="evidence" value="ECO:0007669"/>
    <property type="project" value="TreeGrafter"/>
</dbReference>
<dbReference type="GO" id="GO:0003999">
    <property type="term" value="F:adenine phosphoribosyltransferase activity"/>
    <property type="evidence" value="ECO:0007669"/>
    <property type="project" value="UniProtKB-UniRule"/>
</dbReference>
<dbReference type="GO" id="GO:0016208">
    <property type="term" value="F:AMP binding"/>
    <property type="evidence" value="ECO:0007669"/>
    <property type="project" value="TreeGrafter"/>
</dbReference>
<dbReference type="GO" id="GO:0006168">
    <property type="term" value="P:adenine salvage"/>
    <property type="evidence" value="ECO:0007669"/>
    <property type="project" value="InterPro"/>
</dbReference>
<dbReference type="GO" id="GO:0044209">
    <property type="term" value="P:AMP salvage"/>
    <property type="evidence" value="ECO:0007669"/>
    <property type="project" value="UniProtKB-UniRule"/>
</dbReference>
<dbReference type="GO" id="GO:0006166">
    <property type="term" value="P:purine ribonucleoside salvage"/>
    <property type="evidence" value="ECO:0007669"/>
    <property type="project" value="UniProtKB-KW"/>
</dbReference>
<dbReference type="CDD" id="cd06223">
    <property type="entry name" value="PRTases_typeI"/>
    <property type="match status" value="1"/>
</dbReference>
<dbReference type="FunFam" id="3.40.50.2020:FF:000004">
    <property type="entry name" value="Adenine phosphoribosyltransferase"/>
    <property type="match status" value="1"/>
</dbReference>
<dbReference type="Gene3D" id="3.40.50.2020">
    <property type="match status" value="1"/>
</dbReference>
<dbReference type="HAMAP" id="MF_00004">
    <property type="entry name" value="Aden_phosphoribosyltr"/>
    <property type="match status" value="1"/>
</dbReference>
<dbReference type="InterPro" id="IPR005764">
    <property type="entry name" value="Ade_phspho_trans"/>
</dbReference>
<dbReference type="InterPro" id="IPR000836">
    <property type="entry name" value="PRibTrfase_dom"/>
</dbReference>
<dbReference type="InterPro" id="IPR029057">
    <property type="entry name" value="PRTase-like"/>
</dbReference>
<dbReference type="InterPro" id="IPR050054">
    <property type="entry name" value="UPRTase/APRTase"/>
</dbReference>
<dbReference type="NCBIfam" id="TIGR01090">
    <property type="entry name" value="apt"/>
    <property type="match status" value="1"/>
</dbReference>
<dbReference type="NCBIfam" id="NF002634">
    <property type="entry name" value="PRK02304.1-3"/>
    <property type="match status" value="1"/>
</dbReference>
<dbReference type="NCBIfam" id="NF002636">
    <property type="entry name" value="PRK02304.1-5"/>
    <property type="match status" value="1"/>
</dbReference>
<dbReference type="PANTHER" id="PTHR32315">
    <property type="entry name" value="ADENINE PHOSPHORIBOSYLTRANSFERASE"/>
    <property type="match status" value="1"/>
</dbReference>
<dbReference type="PANTHER" id="PTHR32315:SF3">
    <property type="entry name" value="ADENINE PHOSPHORIBOSYLTRANSFERASE"/>
    <property type="match status" value="1"/>
</dbReference>
<dbReference type="Pfam" id="PF00156">
    <property type="entry name" value="Pribosyltran"/>
    <property type="match status" value="1"/>
</dbReference>
<dbReference type="SUPFAM" id="SSF53271">
    <property type="entry name" value="PRTase-like"/>
    <property type="match status" value="1"/>
</dbReference>
<name>APT_MYCAP</name>
<keyword id="KW-0963">Cytoplasm</keyword>
<keyword id="KW-0328">Glycosyltransferase</keyword>
<keyword id="KW-0660">Purine salvage</keyword>
<keyword id="KW-1185">Reference proteome</keyword>
<keyword id="KW-0808">Transferase</keyword>
<organism>
    <name type="scientific">Mycoplasmopsis agalactiae (strain NCTC 10123 / CIP 59.7 / PG2)</name>
    <name type="common">Mycoplasma agalactiae</name>
    <dbReference type="NCBI Taxonomy" id="347257"/>
    <lineage>
        <taxon>Bacteria</taxon>
        <taxon>Bacillati</taxon>
        <taxon>Mycoplasmatota</taxon>
        <taxon>Mycoplasmoidales</taxon>
        <taxon>Metamycoplasmataceae</taxon>
        <taxon>Mycoplasmopsis</taxon>
    </lineage>
</organism>
<accession>A5IZD7</accession>
<reference key="1">
    <citation type="journal article" date="2007" name="PLoS Genet.">
        <title>Being pathogenic, plastic, and sexual while living with a nearly minimal bacterial genome.</title>
        <authorList>
            <person name="Sirand-Pugnet P."/>
            <person name="Lartigue C."/>
            <person name="Marenda M."/>
            <person name="Jacob D."/>
            <person name="Barre A."/>
            <person name="Barbe V."/>
            <person name="Schenowitz C."/>
            <person name="Mangenot S."/>
            <person name="Couloux A."/>
            <person name="Segurens B."/>
            <person name="de Daruvar A."/>
            <person name="Blanchard A."/>
            <person name="Citti C."/>
        </authorList>
    </citation>
    <scope>NUCLEOTIDE SEQUENCE [LARGE SCALE GENOMIC DNA]</scope>
    <source>
        <strain>NCTC 10123 / CIP 59.7 / PG2</strain>
    </source>
</reference>
<proteinExistence type="inferred from homology"/>
<gene>
    <name evidence="1" type="primary">apt</name>
    <name type="ordered locus">MAG6960</name>
</gene>